<name>YGS9_SCHPO</name>
<evidence type="ECO:0000305" key="1"/>
<accession>O94386</accession>
<proteinExistence type="inferred from homology"/>
<comment type="similarity">
    <text evidence="1">Belongs to the CAF1 family.</text>
</comment>
<feature type="chain" id="PRO_0000310341" description="Uncharacterized protein C29A10.09c">
    <location>
        <begin position="1"/>
        <end position="427"/>
    </location>
</feature>
<reference key="1">
    <citation type="journal article" date="2002" name="Nature">
        <title>The genome sequence of Schizosaccharomyces pombe.</title>
        <authorList>
            <person name="Wood V."/>
            <person name="Gwilliam R."/>
            <person name="Rajandream M.A."/>
            <person name="Lyne M.H."/>
            <person name="Lyne R."/>
            <person name="Stewart A."/>
            <person name="Sgouros J.G."/>
            <person name="Peat N."/>
            <person name="Hayles J."/>
            <person name="Baker S.G."/>
            <person name="Basham D."/>
            <person name="Bowman S."/>
            <person name="Brooks K."/>
            <person name="Brown D."/>
            <person name="Brown S."/>
            <person name="Chillingworth T."/>
            <person name="Churcher C.M."/>
            <person name="Collins M."/>
            <person name="Connor R."/>
            <person name="Cronin A."/>
            <person name="Davis P."/>
            <person name="Feltwell T."/>
            <person name="Fraser A."/>
            <person name="Gentles S."/>
            <person name="Goble A."/>
            <person name="Hamlin N."/>
            <person name="Harris D.E."/>
            <person name="Hidalgo J."/>
            <person name="Hodgson G."/>
            <person name="Holroyd S."/>
            <person name="Hornsby T."/>
            <person name="Howarth S."/>
            <person name="Huckle E.J."/>
            <person name="Hunt S."/>
            <person name="Jagels K."/>
            <person name="James K.D."/>
            <person name="Jones L."/>
            <person name="Jones M."/>
            <person name="Leather S."/>
            <person name="McDonald S."/>
            <person name="McLean J."/>
            <person name="Mooney P."/>
            <person name="Moule S."/>
            <person name="Mungall K.L."/>
            <person name="Murphy L.D."/>
            <person name="Niblett D."/>
            <person name="Odell C."/>
            <person name="Oliver K."/>
            <person name="O'Neil S."/>
            <person name="Pearson D."/>
            <person name="Quail M.A."/>
            <person name="Rabbinowitsch E."/>
            <person name="Rutherford K.M."/>
            <person name="Rutter S."/>
            <person name="Saunders D."/>
            <person name="Seeger K."/>
            <person name="Sharp S."/>
            <person name="Skelton J."/>
            <person name="Simmonds M.N."/>
            <person name="Squares R."/>
            <person name="Squares S."/>
            <person name="Stevens K."/>
            <person name="Taylor K."/>
            <person name="Taylor R.G."/>
            <person name="Tivey A."/>
            <person name="Walsh S.V."/>
            <person name="Warren T."/>
            <person name="Whitehead S."/>
            <person name="Woodward J.R."/>
            <person name="Volckaert G."/>
            <person name="Aert R."/>
            <person name="Robben J."/>
            <person name="Grymonprez B."/>
            <person name="Weltjens I."/>
            <person name="Vanstreels E."/>
            <person name="Rieger M."/>
            <person name="Schaefer M."/>
            <person name="Mueller-Auer S."/>
            <person name="Gabel C."/>
            <person name="Fuchs M."/>
            <person name="Duesterhoeft A."/>
            <person name="Fritzc C."/>
            <person name="Holzer E."/>
            <person name="Moestl D."/>
            <person name="Hilbert H."/>
            <person name="Borzym K."/>
            <person name="Langer I."/>
            <person name="Beck A."/>
            <person name="Lehrach H."/>
            <person name="Reinhardt R."/>
            <person name="Pohl T.M."/>
            <person name="Eger P."/>
            <person name="Zimmermann W."/>
            <person name="Wedler H."/>
            <person name="Wambutt R."/>
            <person name="Purnelle B."/>
            <person name="Goffeau A."/>
            <person name="Cadieu E."/>
            <person name="Dreano S."/>
            <person name="Gloux S."/>
            <person name="Lelaure V."/>
            <person name="Mottier S."/>
            <person name="Galibert F."/>
            <person name="Aves S.J."/>
            <person name="Xiang Z."/>
            <person name="Hunt C."/>
            <person name="Moore K."/>
            <person name="Hurst S.M."/>
            <person name="Lucas M."/>
            <person name="Rochet M."/>
            <person name="Gaillardin C."/>
            <person name="Tallada V.A."/>
            <person name="Garzon A."/>
            <person name="Thode G."/>
            <person name="Daga R.R."/>
            <person name="Cruzado L."/>
            <person name="Jimenez J."/>
            <person name="Sanchez M."/>
            <person name="del Rey F."/>
            <person name="Benito J."/>
            <person name="Dominguez A."/>
            <person name="Revuelta J.L."/>
            <person name="Moreno S."/>
            <person name="Armstrong J."/>
            <person name="Forsburg S.L."/>
            <person name="Cerutti L."/>
            <person name="Lowe T."/>
            <person name="McCombie W.R."/>
            <person name="Paulsen I."/>
            <person name="Potashkin J."/>
            <person name="Shpakovski G.V."/>
            <person name="Ussery D."/>
            <person name="Barrell B.G."/>
            <person name="Nurse P."/>
        </authorList>
    </citation>
    <scope>NUCLEOTIDE SEQUENCE [LARGE SCALE GENOMIC DNA]</scope>
    <source>
        <strain>972 / ATCC 24843</strain>
    </source>
</reference>
<gene>
    <name type="ORF">SPBC29A10.09c</name>
</gene>
<keyword id="KW-1185">Reference proteome</keyword>
<protein>
    <recommendedName>
        <fullName>Uncharacterized protein C29A10.09c</fullName>
    </recommendedName>
</protein>
<organism>
    <name type="scientific">Schizosaccharomyces pombe (strain 972 / ATCC 24843)</name>
    <name type="common">Fission yeast</name>
    <dbReference type="NCBI Taxonomy" id="284812"/>
    <lineage>
        <taxon>Eukaryota</taxon>
        <taxon>Fungi</taxon>
        <taxon>Dikarya</taxon>
        <taxon>Ascomycota</taxon>
        <taxon>Taphrinomycotina</taxon>
        <taxon>Schizosaccharomycetes</taxon>
        <taxon>Schizosaccharomycetales</taxon>
        <taxon>Schizosaccharomycetaceae</taxon>
        <taxon>Schizosaccharomyces</taxon>
    </lineage>
</organism>
<sequence>MEIHGKNFLETLKELEKHVDSAHYVSIDCEFSGLLRDFNLNNKNTLQDRYELLRKSSIRYTILQIGITFIYLQNNGKSSCIPVNINVSPLVKDELHLKRDFCSEASSIKFLIQQGFDFNKQLTEGVPYLSRIEERNLIDKVNERSTDDLTSSILDACDEEILVDARNQIKNWLSSELSHSTSKYLNITTSNRFIRKAIQSLVKIEFPTLKSYPKRTFLQVRKAIENSTTQCSATSKSELKEDIASDQLILNNLNLIKQNVGLRHLWDYILKKKKSVVCHNGMADLVYLFSLFEGKVPETILEFSELCLSSFKSIYDTKLLYLKSDDLQHVSDGIPTDLLSLVSKISLPPVPSNSSSQRSNVSLNSLIECPYKSMMSRKRPHEAGKDSYDTALLFVYYVMRTKHSDIQRWQNVLPIHGSFLDLNKYCS</sequence>
<dbReference type="EMBL" id="CU329671">
    <property type="protein sequence ID" value="CAA22437.1"/>
    <property type="molecule type" value="Genomic_DNA"/>
</dbReference>
<dbReference type="PIR" id="T40064">
    <property type="entry name" value="T40064"/>
</dbReference>
<dbReference type="SMR" id="O94386"/>
<dbReference type="BioGRID" id="277043">
    <property type="interactions" value="6"/>
</dbReference>
<dbReference type="FunCoup" id="O94386">
    <property type="interactions" value="742"/>
</dbReference>
<dbReference type="STRING" id="284812.O94386"/>
<dbReference type="PaxDb" id="4896-SPBC29A10.09c.1"/>
<dbReference type="EnsemblFungi" id="SPBC29A10.09c.1">
    <property type="protein sequence ID" value="SPBC29A10.09c.1:pep"/>
    <property type="gene ID" value="SPBC29A10.09c"/>
</dbReference>
<dbReference type="KEGG" id="spo:2540515"/>
<dbReference type="PomBase" id="SPBC29A10.09c"/>
<dbReference type="VEuPathDB" id="FungiDB:SPBC29A10.09c"/>
<dbReference type="eggNOG" id="KOG1990">
    <property type="taxonomic scope" value="Eukaryota"/>
</dbReference>
<dbReference type="HOGENOM" id="CLU_018030_1_1_1"/>
<dbReference type="InParanoid" id="O94386"/>
<dbReference type="OMA" id="SCERERC"/>
<dbReference type="PhylomeDB" id="O94386"/>
<dbReference type="PRO" id="PR:O94386"/>
<dbReference type="Proteomes" id="UP000002485">
    <property type="component" value="Chromosome II"/>
</dbReference>
<dbReference type="GO" id="GO:0000779">
    <property type="term" value="C:condensed chromosome, centromeric region"/>
    <property type="evidence" value="ECO:0000269"/>
    <property type="project" value="PomBase"/>
</dbReference>
<dbReference type="GO" id="GO:0005634">
    <property type="term" value="C:nucleus"/>
    <property type="evidence" value="ECO:0000269"/>
    <property type="project" value="PomBase"/>
</dbReference>
<dbReference type="GO" id="GO:0000175">
    <property type="term" value="F:3'-5'-RNA exonuclease activity"/>
    <property type="evidence" value="ECO:0000314"/>
    <property type="project" value="PomBase"/>
</dbReference>
<dbReference type="GO" id="GO:0004535">
    <property type="term" value="F:poly(A)-specific ribonuclease activity"/>
    <property type="evidence" value="ECO:0000314"/>
    <property type="project" value="PomBase"/>
</dbReference>
<dbReference type="GO" id="GO:0003723">
    <property type="term" value="F:RNA binding"/>
    <property type="evidence" value="ECO:0000318"/>
    <property type="project" value="GO_Central"/>
</dbReference>
<dbReference type="GO" id="GO:1990431">
    <property type="term" value="P:priRNA 3'-end processing"/>
    <property type="evidence" value="ECO:0000315"/>
    <property type="project" value="PomBase"/>
</dbReference>
<dbReference type="GO" id="GO:0031048">
    <property type="term" value="P:regulatory ncRNA-mediated heterochromatin formation"/>
    <property type="evidence" value="ECO:0000315"/>
    <property type="project" value="PomBase"/>
</dbReference>
<dbReference type="GO" id="GO:1990432">
    <property type="term" value="P:siRNA 3'-end processing"/>
    <property type="evidence" value="ECO:0000315"/>
    <property type="project" value="PomBase"/>
</dbReference>
<dbReference type="Gene3D" id="3.30.420.10">
    <property type="entry name" value="Ribonuclease H-like superfamily/Ribonuclease H"/>
    <property type="match status" value="2"/>
</dbReference>
<dbReference type="InterPro" id="IPR051181">
    <property type="entry name" value="CAF1_poly(A)_ribonucleases"/>
</dbReference>
<dbReference type="InterPro" id="IPR006941">
    <property type="entry name" value="RNase_CAF1"/>
</dbReference>
<dbReference type="InterPro" id="IPR012337">
    <property type="entry name" value="RNaseH-like_sf"/>
</dbReference>
<dbReference type="InterPro" id="IPR036397">
    <property type="entry name" value="RNaseH_sf"/>
</dbReference>
<dbReference type="PANTHER" id="PTHR15092">
    <property type="entry name" value="POLY A -SPECIFIC RIBONUCLEASE/TARGET OF EGR1, MEMBER 1"/>
    <property type="match status" value="1"/>
</dbReference>
<dbReference type="PANTHER" id="PTHR15092:SF22">
    <property type="entry name" value="POLY(A)-SPECIFIC RIBONUCLEASE PNLDC1"/>
    <property type="match status" value="1"/>
</dbReference>
<dbReference type="Pfam" id="PF04857">
    <property type="entry name" value="CAF1"/>
    <property type="match status" value="1"/>
</dbReference>
<dbReference type="SUPFAM" id="SSF53098">
    <property type="entry name" value="Ribonuclease H-like"/>
    <property type="match status" value="1"/>
</dbReference>